<evidence type="ECO:0000250" key="1"/>
<evidence type="ECO:0000250" key="2">
    <source>
        <dbReference type="UniProtKB" id="Q15475"/>
    </source>
</evidence>
<evidence type="ECO:0000255" key="3">
    <source>
        <dbReference type="PROSITE-ProRule" id="PRU00108"/>
    </source>
</evidence>
<evidence type="ECO:0000256" key="4">
    <source>
        <dbReference type="SAM" id="MobiDB-lite"/>
    </source>
</evidence>
<evidence type="ECO:0000269" key="5">
    <source>
    </source>
</evidence>
<evidence type="ECO:0000269" key="6">
    <source>
    </source>
</evidence>
<evidence type="ECO:0000269" key="7">
    <source>
    </source>
</evidence>
<evidence type="ECO:0000269" key="8">
    <source>
    </source>
</evidence>
<evidence type="ECO:0000269" key="9">
    <source>
    </source>
</evidence>
<evidence type="ECO:0000269" key="10">
    <source>
    </source>
</evidence>
<evidence type="ECO:0000269" key="11">
    <source>
    </source>
</evidence>
<evidence type="ECO:0000269" key="12">
    <source>
    </source>
</evidence>
<evidence type="ECO:0000269" key="13">
    <source>
    </source>
</evidence>
<evidence type="ECO:0000269" key="14">
    <source>
    </source>
</evidence>
<evidence type="ECO:0000269" key="15">
    <source>
    </source>
</evidence>
<evidence type="ECO:0000305" key="16"/>
<name>SIX1_MOUSE</name>
<protein>
    <recommendedName>
        <fullName>Homeobox protein SIX1</fullName>
    </recommendedName>
    <alternativeName>
        <fullName>Sine oculis homeobox homolog 1</fullName>
    </alternativeName>
</protein>
<comment type="function">
    <text evidence="2 5 6 7 8 9 10 11 13 15">Transcription factor that is involved in the regulation of cell proliferation, apoptosis and embryonic development (PubMed:12215533, PubMed:12668636, PubMed:12834866, PubMed:14628042, PubMed:14695375). Plays an important role in the development of several organs, including kidney, muscle and inner ear (PubMed:12668636, PubMed:12783782, PubMed:12834866, PubMed:14628042, PubMed:14695375). Depending on context, functions as a transcriptional repressor or activator (PubMed:14628042). Lacks an activation domain, and requires interaction with EYA family members for transcription activation (By similarity). Mediates nuclear translocation of EYA1 and EYA2 (By similarity). Binds the 5'-TCA[AG][AG]TTNC-3' motif present in the MEF3 element in the MYOG promoter and CIDEA enhancer (By similarity). Regulates the expression of numerous genes, including MYC, CCNA1, CCND1 and EZR (PubMed:16488997). Acts as an activator of the IGFBP5 promoter, probably coactivated by EYA2 (PubMed:11978764). Repression of precursor cell proliferation in myoblasts is switched to activation through recruitment of EYA3 to the SIX1-DACH1 complex (PubMed:14628042). During myogenesis, seems to act together with EYA2 and DACH2. Regulates the expression of CCNA1 (By similarity). Promotes brown adipocyte differentiation (PubMed:27923061).</text>
</comment>
<comment type="subunit">
    <text evidence="2 10 12 15">Interacts with DACH1 (PubMed:14628042). Interacts with EYA1 (PubMed:15141091). Interacts with EYA2 (By similarity). Interacts with CDH1 (By similarity). Interacts with TBX18 (By similarity). Interacts with CEBPA (PubMed:27923061). Interacts with CEBPB (PubMed:27923061). Interacts with EBF2 (PubMed:27923061).</text>
</comment>
<comment type="interaction">
    <interactant intactId="EBI-1368483">
        <id>Q62231</id>
    </interactant>
    <interactant intactId="EBI-1368503">
        <id>P97767</id>
        <label>Eya1</label>
    </interactant>
    <organismsDiffer>false</organismsDiffer>
    <experiments>3</experiments>
</comment>
<comment type="subcellular location">
    <subcellularLocation>
        <location evidence="2">Nucleus</location>
    </subcellularLocation>
    <subcellularLocation>
        <location evidence="2">Cytoplasm</location>
    </subcellularLocation>
</comment>
<comment type="tissue specificity">
    <text>Expressed in phalangeal tendons and in skeletal muscle and in head and body mesenchyme.</text>
</comment>
<comment type="developmental stage">
    <text evidence="8 11">First expressed at 8.2-8.5 dpc of embryo development in the anterior head mesoderm and developing pharyngeal pouches. Expression in the developing limb begins at 11 dpc and is more pronounced dorsally. It progresses into the developing phalanges at 13.5 dpc. In the developing inner ear detected in the otic placode and the surrounding surface ectoderm at 8.5 dpc. Expression became prominent at the invaginating otic pit and the nascent otic vesicle at 9.5 dpc. At 10.5 dpc, expression was limited to the ventral half of the otic vesicle. Subsequently, the expression became gradually restricted to the cochlear region at 11.5 dpc and 12.5 dpc. At later stages detected exclusively in the cochlea at 14.5 dpc, and the expression in the cochlear duct persisted in the neonate. In the developing kidney, is expressed in the uninduced metanephric mesenchyme at 10.5 dpc and in the induced mesenchyme around the ureteric bud at 11.5 dpc. At 17.5 dpc to P0, expression becomes restricted to a subpopulation of collecting tubule epithelial cells.</text>
</comment>
<comment type="PTM">
    <text evidence="1">Phosphorylated during interphase; becomes hyperphosphorylated during mitosis. Hyperphosphorylation impairs binding to promoter elements (By similarity).</text>
</comment>
<comment type="PTM">
    <text evidence="1">Ubiquitinated by the anaphase promoting complex (APC), leading to its proteasomal degradation.</text>
</comment>
<comment type="disruption phenotype">
    <text evidence="7 8 9 10 14">Perinatal lethality. Mice show failure in renal organogenesis, a severe reduction of most migratory hypaxial muscles including those of the forelimb, diaphragm and tongue, and severe rib-cage deformation. Besides, mice display craniofacial defects, including loss of inner ear structures. Pax2, Six2 and Sall1 expression is markedly reduced in the metanephric mesenchyme at 10.5 dpc during kidney development. Mice lacking both Six1 and Eya1 show defects in kidney development, complete absence of hypaxial muscle, severe reduction in epaxial muscle and a 5-10-fold by volume smaller pituarity than the wild-type gland.</text>
</comment>
<comment type="similarity">
    <text evidence="16">Belongs to the SIX/Sine oculis homeobox family.</text>
</comment>
<accession>Q62231</accession>
<accession>Q8CIL7</accession>
<feature type="chain" id="PRO_0000049296" description="Homeobox protein SIX1">
    <location>
        <begin position="1"/>
        <end position="284"/>
    </location>
</feature>
<feature type="DNA-binding region" description="Homeobox" evidence="3">
    <location>
        <begin position="124"/>
        <end position="183"/>
    </location>
</feature>
<feature type="region of interest" description="Disordered" evidence="4">
    <location>
        <begin position="168"/>
        <end position="284"/>
    </location>
</feature>
<feature type="compositionally biased region" description="Basic and acidic residues" evidence="4">
    <location>
        <begin position="179"/>
        <end position="190"/>
    </location>
</feature>
<feature type="compositionally biased region" description="Polar residues" evidence="4">
    <location>
        <begin position="227"/>
        <end position="284"/>
    </location>
</feature>
<feature type="sequence conflict" description="In Ref. 1; CAA56585." evidence="16" ref="1">
    <original>EQV</original>
    <variation>GQG</variation>
    <location>
        <begin position="12"/>
        <end position="14"/>
    </location>
</feature>
<reference key="1">
    <citation type="journal article" date="1995" name="Development">
        <title>Homeobox genes and connective tissue patterning.</title>
        <authorList>
            <person name="Oliver G."/>
            <person name="Wehr R."/>
            <person name="Jenkins N.A."/>
            <person name="Copeland N.G."/>
            <person name="Cheyette B.N.R."/>
            <person name="Hartenstein V."/>
            <person name="Zipursky S.L."/>
            <person name="Gruss P."/>
        </authorList>
    </citation>
    <scope>NUCLEOTIDE SEQUENCE [MRNA] OF 12-284</scope>
    <source>
        <strain>C57BL/6J</strain>
        <tissue>Embryo</tissue>
    </source>
</reference>
<reference key="2">
    <citation type="journal article" date="2004" name="Genome Res.">
        <title>The status, quality, and expansion of the NIH full-length cDNA project: the Mammalian Gene Collection (MGC).</title>
        <authorList>
            <consortium name="The MGC Project Team"/>
        </authorList>
    </citation>
    <scope>NUCLEOTIDE SEQUENCE [LARGE SCALE MRNA]</scope>
    <source>
        <strain>FVB/N</strain>
        <tissue>Salivary gland</tissue>
    </source>
</reference>
<reference key="3">
    <citation type="journal article" date="2002" name="Hum. Mol. Genet.">
        <title>Identification of transcriptional targets for Six5: implication for the pathogenesis of myotonic dystrophy type 1.</title>
        <authorList>
            <person name="Sato S."/>
            <person name="Nakamura M."/>
            <person name="Cho D.H."/>
            <person name="Tapscott S.J."/>
            <person name="Ozaki H."/>
            <person name="Kawakami K."/>
        </authorList>
    </citation>
    <scope>FUNCTION</scope>
</reference>
<reference key="4">
    <citation type="journal article" date="1998" name="Proc. Natl. Acad. Sci. U.S.A.">
        <title>Expression of myogenin during embryogenesis is controlled by Six/sine oculis homeoproteins through a conserved MEF3 binding site.</title>
        <authorList>
            <person name="Spitz F."/>
            <person name="Demignon J."/>
            <person name="Porteu A."/>
            <person name="Kahn A."/>
            <person name="Concordet J.P."/>
            <person name="Daegelen D."/>
            <person name="Maire P."/>
        </authorList>
    </citation>
    <scope>DNA-BINDING</scope>
</reference>
<reference key="5">
    <citation type="journal article" date="2002" name="Mol. Cell. Biol.">
        <title>Molecular interaction and synergistic activation of a promoter by Six, Eya, and Dach proteins mediated through CREB binding protein.</title>
        <authorList>
            <person name="Ikeda K."/>
            <person name="Watanabe Y."/>
            <person name="Ohto H."/>
            <person name="Kawakami K."/>
        </authorList>
    </citation>
    <scope>FUNCTION</scope>
    <scope>INTERACTION WITH EYA3</scope>
</reference>
<reference key="6">
    <citation type="journal article" date="2003" name="Development">
        <title>Altered myogenesis in Six1-deficient mice.</title>
        <authorList>
            <person name="Laclef C."/>
            <person name="Hamard G."/>
            <person name="Demignon J."/>
            <person name="Souil E."/>
            <person name="Houbron C."/>
            <person name="Maire P."/>
        </authorList>
    </citation>
    <scope>DISRUPTION PHENOTYPE</scope>
    <scope>FUNCTION</scope>
</reference>
<reference key="7">
    <citation type="journal article" date="2003" name="Development">
        <title>Six1 is required for the early organogenesis of mammalian kidney.</title>
        <authorList>
            <person name="Xu P.X."/>
            <person name="Zheng W."/>
            <person name="Huang L."/>
            <person name="Maire P."/>
            <person name="Laclef C."/>
            <person name="Silvius D."/>
        </authorList>
    </citation>
    <scope>FUNCTION</scope>
    <scope>DEVELOPMENTAL STAGE</scope>
    <scope>DISRUPTION PHENOTYPE</scope>
</reference>
<reference key="8">
    <citation type="journal article" date="2003" name="Mech. Dev.">
        <title>Thymus, kidney and craniofacial abnormalities in Six 1 deficient mice.</title>
        <authorList>
            <person name="Laclef C."/>
            <person name="Souil E."/>
            <person name="Demignon J."/>
            <person name="Maire P."/>
        </authorList>
    </citation>
    <scope>DISRUPTION PHENOTYPE</scope>
    <scope>FUNCTION</scope>
</reference>
<reference key="9">
    <citation type="journal article" date="2003" name="Nature">
        <title>Eya protein phosphatase activity regulates Six1-Dach-Eya transcriptional effects in mammalian organogenesis.</title>
        <authorList>
            <person name="Li X."/>
            <person name="Oghi K.A."/>
            <person name="Zhang J."/>
            <person name="Krones A."/>
            <person name="Bush K.T."/>
            <person name="Glass C.K."/>
            <person name="Nigam S.K."/>
            <person name="Aggarwal A.K."/>
            <person name="Maas R."/>
            <person name="Rose D.W."/>
            <person name="Rosenfeld M.G."/>
        </authorList>
    </citation>
    <scope>FUNCTION</scope>
    <scope>DISRUPTION PHENOTYPE</scope>
    <scope>INTERACTION WITH DACH1</scope>
</reference>
<reference key="10">
    <citation type="journal article" date="2004" name="Nature">
        <authorList>
            <person name="Li X."/>
            <person name="Oghi K.A."/>
            <person name="Zhang J."/>
            <person name="Krones A."/>
            <person name="Bush K.T."/>
            <person name="Glass C.K."/>
            <person name="Nigam S.K."/>
            <person name="Aggarwal A.K."/>
            <person name="Maas R."/>
            <person name="Rose D.W."/>
            <person name="Rosenfeld M.G."/>
        </authorList>
    </citation>
    <scope>ERRATUM OF PUBMED:14628042</scope>
</reference>
<reference key="11">
    <citation type="journal article" date="2004" name="Development">
        <title>Six1 controls patterning of the mouse otic vesicle.</title>
        <authorList>
            <person name="Ozaki H."/>
            <person name="Nakamura K."/>
            <person name="Funahashi J."/>
            <person name="Ikeda K."/>
            <person name="Yamada G."/>
            <person name="Tokano H."/>
            <person name="Okamura H.O."/>
            <person name="Kitamura K."/>
            <person name="Muto S."/>
            <person name="Kotaki H."/>
            <person name="Sudo K."/>
            <person name="Horai R."/>
            <person name="Iwakura Y."/>
            <person name="Kawakami K."/>
        </authorList>
    </citation>
    <scope>FUNCTION</scope>
    <scope>DEVELOPMENTAL STAGE</scope>
</reference>
<reference key="12">
    <citation type="journal article" date="2004" name="Proc. Natl. Acad. Sci. U.S.A.">
        <title>SIX1 mutations cause branchio-oto-renal syndrome by disruption of EYA1-SIX1-DNA complexes.</title>
        <authorList>
            <person name="Ruf R.G."/>
            <person name="Xu P.-X."/>
            <person name="Silvius D."/>
            <person name="Otto E.A."/>
            <person name="Beekmann F."/>
            <person name="Muerb U.T."/>
            <person name="Kumar S."/>
            <person name="Neuhaus T.J."/>
            <person name="Kemper M.J."/>
            <person name="Raymond R.M. Jr."/>
            <person name="Brophy P.D."/>
            <person name="Berkman J."/>
            <person name="Gattas M."/>
            <person name="Hyland V."/>
            <person name="Ruf E.-M."/>
            <person name="Schwartz C."/>
            <person name="Chang E.H."/>
            <person name="Smith R.J.H."/>
            <person name="Stratakis C.A."/>
            <person name="Weil D."/>
            <person name="Petit C."/>
            <person name="Hildebrandt F."/>
        </authorList>
    </citation>
    <scope>INTERACTION WITH EYA1</scope>
</reference>
<reference key="13">
    <citation type="journal article" date="2006" name="Cancer Res.">
        <title>The homeoprotein six1 transcriptionally activates multiple protumorigenic genes but requires ezrin to promote metastasis.</title>
        <authorList>
            <person name="Yu Y."/>
            <person name="Davicioni E."/>
            <person name="Triche T.J."/>
            <person name="Merlino G."/>
        </authorList>
    </citation>
    <scope>FUNCTION</scope>
</reference>
<reference key="14">
    <citation type="journal article" date="2011" name="Dev. Biol.">
        <title>Genesis of muscle fiber-type diversity during mouse embryogenesis relies on Six1 and Six4 gene expression.</title>
        <authorList>
            <person name="Richard A.F."/>
            <person name="Demignon J."/>
            <person name="Sakakibara I."/>
            <person name="Pujol J."/>
            <person name="Favier M."/>
            <person name="Strochlic L."/>
            <person name="Le Grand F."/>
            <person name="Sgarioto N."/>
            <person name="Guernec A."/>
            <person name="Schmitt A."/>
            <person name="Cagnard N."/>
            <person name="Huang R."/>
            <person name="Legay C."/>
            <person name="Guillet-Deniau I."/>
            <person name="Maire P."/>
        </authorList>
    </citation>
    <scope>DISRUPTION PHENOTYPE</scope>
</reference>
<reference key="15">
    <citation type="journal article" date="2016" name="PLoS Genet.">
        <title>Comparative Transcriptomic and Epigenomic Analyses Reveal New Regulators of Murine Brown Adipogenesis.</title>
        <authorList>
            <person name="Brunmeir R."/>
            <person name="Wu J."/>
            <person name="Peng X."/>
            <person name="Kim S.Y."/>
            <person name="Julien S.G."/>
            <person name="Zhang Q."/>
            <person name="Xie W."/>
            <person name="Xu F."/>
        </authorList>
    </citation>
    <scope>FUNCTION</scope>
    <scope>INTERACTION WITH CEBPA; CEBPB AND EBF2</scope>
</reference>
<gene>
    <name type="primary">Six1</name>
</gene>
<sequence length="284" mass="32210">MSMLPSFGFTQEQVACVCEVLQQGGNLERLGRFLWSLPACDHLHKNESVLKAKAVVAFHRGNFRELYKILESHQFSPHNHPKLQQLWLKAHYVEAEKLRGRPLGAVGKYRVRRKFPLPRTIWDGEETSYCFKEKSRGVLREWYAHNPYPSPREKRELAEATGLTTTQVSNWFKNRRQRDRAAEAKERENTENNNSSSNKQNQLSPLEGGKPLMSSSEEEFSPPQSPDQNSVLLLQSNMGHARSSNYSLPGLTASQPSHGLQAHQHQLQDSLLGPLTSSLVDLGS</sequence>
<proteinExistence type="evidence at protein level"/>
<organism>
    <name type="scientific">Mus musculus</name>
    <name type="common">Mouse</name>
    <dbReference type="NCBI Taxonomy" id="10090"/>
    <lineage>
        <taxon>Eukaryota</taxon>
        <taxon>Metazoa</taxon>
        <taxon>Chordata</taxon>
        <taxon>Craniata</taxon>
        <taxon>Vertebrata</taxon>
        <taxon>Euteleostomi</taxon>
        <taxon>Mammalia</taxon>
        <taxon>Eutheria</taxon>
        <taxon>Euarchontoglires</taxon>
        <taxon>Glires</taxon>
        <taxon>Rodentia</taxon>
        <taxon>Myomorpha</taxon>
        <taxon>Muroidea</taxon>
        <taxon>Muridae</taxon>
        <taxon>Murinae</taxon>
        <taxon>Mus</taxon>
        <taxon>Mus</taxon>
    </lineage>
</organism>
<keyword id="KW-0010">Activator</keyword>
<keyword id="KW-0053">Apoptosis</keyword>
<keyword id="KW-0963">Cytoplasm</keyword>
<keyword id="KW-0217">Developmental protein</keyword>
<keyword id="KW-0238">DNA-binding</keyword>
<keyword id="KW-0371">Homeobox</keyword>
<keyword id="KW-0539">Nucleus</keyword>
<keyword id="KW-0597">Phosphoprotein</keyword>
<keyword id="KW-1185">Reference proteome</keyword>
<keyword id="KW-0678">Repressor</keyword>
<keyword id="KW-0804">Transcription</keyword>
<keyword id="KW-0805">Transcription regulation</keyword>
<keyword id="KW-0832">Ubl conjugation</keyword>
<dbReference type="EMBL" id="X80339">
    <property type="protein sequence ID" value="CAA56585.1"/>
    <property type="molecule type" value="mRNA"/>
</dbReference>
<dbReference type="EMBL" id="BC023304">
    <property type="protein sequence ID" value="AAH23304.1"/>
    <property type="molecule type" value="mRNA"/>
</dbReference>
<dbReference type="CCDS" id="CCDS25973.1"/>
<dbReference type="PIR" id="S60751">
    <property type="entry name" value="S60751"/>
</dbReference>
<dbReference type="RefSeq" id="NP_033215.2">
    <property type="nucleotide sequence ID" value="NM_009189.3"/>
</dbReference>
<dbReference type="SMR" id="Q62231"/>
<dbReference type="BioGRID" id="203259">
    <property type="interactions" value="10"/>
</dbReference>
<dbReference type="CORUM" id="Q62231"/>
<dbReference type="FunCoup" id="Q62231">
    <property type="interactions" value="1130"/>
</dbReference>
<dbReference type="IntAct" id="Q62231">
    <property type="interactions" value="1"/>
</dbReference>
<dbReference type="STRING" id="10090.ENSMUSP00000059026"/>
<dbReference type="iPTMnet" id="Q62231"/>
<dbReference type="PhosphoSitePlus" id="Q62231"/>
<dbReference type="PaxDb" id="10090-ENSMUSP00000059026"/>
<dbReference type="Pumba" id="Q62231"/>
<dbReference type="Antibodypedia" id="39">
    <property type="antibodies" value="220 antibodies from 30 providers"/>
</dbReference>
<dbReference type="DNASU" id="20471"/>
<dbReference type="Ensembl" id="ENSMUST00000050029.8">
    <property type="protein sequence ID" value="ENSMUSP00000059026.7"/>
    <property type="gene ID" value="ENSMUSG00000051367.9"/>
</dbReference>
<dbReference type="GeneID" id="20471"/>
<dbReference type="KEGG" id="mmu:20471"/>
<dbReference type="UCSC" id="uc007nwa.2">
    <property type="organism name" value="mouse"/>
</dbReference>
<dbReference type="AGR" id="MGI:102780"/>
<dbReference type="CTD" id="6495"/>
<dbReference type="MGI" id="MGI:102780">
    <property type="gene designation" value="Six1"/>
</dbReference>
<dbReference type="VEuPathDB" id="HostDB:ENSMUSG00000051367"/>
<dbReference type="eggNOG" id="KOG0775">
    <property type="taxonomic scope" value="Eukaryota"/>
</dbReference>
<dbReference type="GeneTree" id="ENSGT00940000156487"/>
<dbReference type="HOGENOM" id="CLU_046914_2_0_1"/>
<dbReference type="InParanoid" id="Q62231"/>
<dbReference type="OMA" id="YKAHYVE"/>
<dbReference type="OrthoDB" id="3501850at2759"/>
<dbReference type="PhylomeDB" id="Q62231"/>
<dbReference type="TreeFam" id="TF315545"/>
<dbReference type="BioGRID-ORCS" id="20471">
    <property type="hits" value="1 hit in 80 CRISPR screens"/>
</dbReference>
<dbReference type="PRO" id="PR:Q62231"/>
<dbReference type="Proteomes" id="UP000000589">
    <property type="component" value="Chromosome 12"/>
</dbReference>
<dbReference type="RNAct" id="Q62231">
    <property type="molecule type" value="protein"/>
</dbReference>
<dbReference type="Bgee" id="ENSMUSG00000051367">
    <property type="expression patterns" value="Expressed in lumbar dorsal root ganglion and 169 other cell types or tissues"/>
</dbReference>
<dbReference type="ExpressionAtlas" id="Q62231">
    <property type="expression patterns" value="baseline and differential"/>
</dbReference>
<dbReference type="GO" id="GO:0005737">
    <property type="term" value="C:cytoplasm"/>
    <property type="evidence" value="ECO:0007669"/>
    <property type="project" value="UniProtKB-SubCell"/>
</dbReference>
<dbReference type="GO" id="GO:0005730">
    <property type="term" value="C:nucleolus"/>
    <property type="evidence" value="ECO:0007669"/>
    <property type="project" value="Ensembl"/>
</dbReference>
<dbReference type="GO" id="GO:0005654">
    <property type="term" value="C:nucleoplasm"/>
    <property type="evidence" value="ECO:0000304"/>
    <property type="project" value="Reactome"/>
</dbReference>
<dbReference type="GO" id="GO:0005634">
    <property type="term" value="C:nucleus"/>
    <property type="evidence" value="ECO:0000314"/>
    <property type="project" value="MGI"/>
</dbReference>
<dbReference type="GO" id="GO:0005667">
    <property type="term" value="C:transcription regulator complex"/>
    <property type="evidence" value="ECO:0000314"/>
    <property type="project" value="MGI"/>
</dbReference>
<dbReference type="GO" id="GO:0003682">
    <property type="term" value="F:chromatin binding"/>
    <property type="evidence" value="ECO:0000316"/>
    <property type="project" value="MGI"/>
</dbReference>
<dbReference type="GO" id="GO:0001228">
    <property type="term" value="F:DNA-binding transcription activator activity, RNA polymerase II-specific"/>
    <property type="evidence" value="ECO:0007669"/>
    <property type="project" value="Ensembl"/>
</dbReference>
<dbReference type="GO" id="GO:0003700">
    <property type="term" value="F:DNA-binding transcription factor activity"/>
    <property type="evidence" value="ECO:0000314"/>
    <property type="project" value="MGI"/>
</dbReference>
<dbReference type="GO" id="GO:0000978">
    <property type="term" value="F:RNA polymerase II cis-regulatory region sequence-specific DNA binding"/>
    <property type="evidence" value="ECO:0007669"/>
    <property type="project" value="Ensembl"/>
</dbReference>
<dbReference type="GO" id="GO:0043565">
    <property type="term" value="F:sequence-specific DNA binding"/>
    <property type="evidence" value="ECO:0000314"/>
    <property type="project" value="MGI"/>
</dbReference>
<dbReference type="GO" id="GO:0001223">
    <property type="term" value="F:transcription coactivator binding"/>
    <property type="evidence" value="ECO:0007669"/>
    <property type="project" value="Ensembl"/>
</dbReference>
<dbReference type="GO" id="GO:0035909">
    <property type="term" value="P:aorta morphogenesis"/>
    <property type="evidence" value="ECO:0000316"/>
    <property type="project" value="MGI"/>
</dbReference>
<dbReference type="GO" id="GO:0006915">
    <property type="term" value="P:apoptotic process"/>
    <property type="evidence" value="ECO:0007669"/>
    <property type="project" value="UniProtKB-KW"/>
</dbReference>
<dbReference type="GO" id="GO:0001658">
    <property type="term" value="P:branching involved in ureteric bud morphogenesis"/>
    <property type="evidence" value="ECO:0000316"/>
    <property type="project" value="MGI"/>
</dbReference>
<dbReference type="GO" id="GO:1905243">
    <property type="term" value="P:cellular response to 3,3',5-triiodo-L-thyronine"/>
    <property type="evidence" value="ECO:0007669"/>
    <property type="project" value="Ensembl"/>
</dbReference>
<dbReference type="GO" id="GO:0090103">
    <property type="term" value="P:cochlea morphogenesis"/>
    <property type="evidence" value="ECO:0000315"/>
    <property type="project" value="MGI"/>
</dbReference>
<dbReference type="GO" id="GO:0048701">
    <property type="term" value="P:embryonic cranial skeleton morphogenesis"/>
    <property type="evidence" value="ECO:0000316"/>
    <property type="project" value="MGI"/>
</dbReference>
<dbReference type="GO" id="GO:0048704">
    <property type="term" value="P:embryonic skeletal system morphogenesis"/>
    <property type="evidence" value="ECO:0000316"/>
    <property type="project" value="MGI"/>
</dbReference>
<dbReference type="GO" id="GO:0086100">
    <property type="term" value="P:endothelin receptor signaling pathway"/>
    <property type="evidence" value="ECO:0000315"/>
    <property type="project" value="MGI"/>
</dbReference>
<dbReference type="GO" id="GO:0030855">
    <property type="term" value="P:epithelial cell differentiation"/>
    <property type="evidence" value="ECO:0000315"/>
    <property type="project" value="MGI"/>
</dbReference>
<dbReference type="GO" id="GO:0021610">
    <property type="term" value="P:facial nerve morphogenesis"/>
    <property type="evidence" value="ECO:0000315"/>
    <property type="project" value="MGI"/>
</dbReference>
<dbReference type="GO" id="GO:0061197">
    <property type="term" value="P:fungiform papilla morphogenesis"/>
    <property type="evidence" value="ECO:0000315"/>
    <property type="project" value="UniProtKB"/>
</dbReference>
<dbReference type="GO" id="GO:0010467">
    <property type="term" value="P:gene expression"/>
    <property type="evidence" value="ECO:0000315"/>
    <property type="project" value="MGI"/>
</dbReference>
<dbReference type="GO" id="GO:0048699">
    <property type="term" value="P:generation of neurons"/>
    <property type="evidence" value="ECO:0000315"/>
    <property type="project" value="UniProtKB"/>
</dbReference>
<dbReference type="GO" id="GO:0048839">
    <property type="term" value="P:inner ear development"/>
    <property type="evidence" value="ECO:0000315"/>
    <property type="project" value="UniProtKB"/>
</dbReference>
<dbReference type="GO" id="GO:0042472">
    <property type="term" value="P:inner ear morphogenesis"/>
    <property type="evidence" value="ECO:0000316"/>
    <property type="project" value="MGI"/>
</dbReference>
<dbReference type="GO" id="GO:0001822">
    <property type="term" value="P:kidney development"/>
    <property type="evidence" value="ECO:0000315"/>
    <property type="project" value="UniProtKB"/>
</dbReference>
<dbReference type="GO" id="GO:0072198">
    <property type="term" value="P:mesenchymal cell proliferation involved in ureter development"/>
    <property type="evidence" value="ECO:0000316"/>
    <property type="project" value="MGI"/>
</dbReference>
<dbReference type="GO" id="GO:0072172">
    <property type="term" value="P:mesonephric tubule formation"/>
    <property type="evidence" value="ECO:0000315"/>
    <property type="project" value="UniProtKB"/>
</dbReference>
<dbReference type="GO" id="GO:0072075">
    <property type="term" value="P:metanephric mesenchyme development"/>
    <property type="evidence" value="ECO:0000315"/>
    <property type="project" value="UniProtKB"/>
</dbReference>
<dbReference type="GO" id="GO:0042474">
    <property type="term" value="P:middle ear morphogenesis"/>
    <property type="evidence" value="ECO:0000315"/>
    <property type="project" value="MGI"/>
</dbReference>
<dbReference type="GO" id="GO:0051451">
    <property type="term" value="P:myoblast migration"/>
    <property type="evidence" value="ECO:0000316"/>
    <property type="project" value="MGI"/>
</dbReference>
<dbReference type="GO" id="GO:0051450">
    <property type="term" value="P:myoblast proliferation"/>
    <property type="evidence" value="ECO:0000316"/>
    <property type="project" value="MGI"/>
</dbReference>
<dbReference type="GO" id="GO:0061055">
    <property type="term" value="P:myotome development"/>
    <property type="evidence" value="ECO:0000315"/>
    <property type="project" value="UniProtKB"/>
</dbReference>
<dbReference type="GO" id="GO:0043066">
    <property type="term" value="P:negative regulation of apoptotic process"/>
    <property type="evidence" value="ECO:0000315"/>
    <property type="project" value="UniProtKB"/>
</dbReference>
<dbReference type="GO" id="GO:0043524">
    <property type="term" value="P:negative regulation of neuron apoptotic process"/>
    <property type="evidence" value="ECO:0000315"/>
    <property type="project" value="UniProtKB"/>
</dbReference>
<dbReference type="GO" id="GO:0000122">
    <property type="term" value="P:negative regulation of transcription by RNA polymerase II"/>
    <property type="evidence" value="ECO:0000314"/>
    <property type="project" value="MGI"/>
</dbReference>
<dbReference type="GO" id="GO:0014033">
    <property type="term" value="P:neural crest cell differentiation"/>
    <property type="evidence" value="ECO:0000316"/>
    <property type="project" value="MGI"/>
</dbReference>
<dbReference type="GO" id="GO:0022008">
    <property type="term" value="P:neurogenesis"/>
    <property type="evidence" value="ECO:0000315"/>
    <property type="project" value="UniProtKB"/>
</dbReference>
<dbReference type="GO" id="GO:0048665">
    <property type="term" value="P:neuron fate specification"/>
    <property type="evidence" value="ECO:0000316"/>
    <property type="project" value="MGI"/>
</dbReference>
<dbReference type="GO" id="GO:0007219">
    <property type="term" value="P:Notch signaling pathway"/>
    <property type="evidence" value="ECO:0000315"/>
    <property type="project" value="MGI"/>
</dbReference>
<dbReference type="GO" id="GO:0030910">
    <property type="term" value="P:olfactory placode formation"/>
    <property type="evidence" value="ECO:0000315"/>
    <property type="project" value="UniProtKB"/>
</dbReference>
<dbReference type="GO" id="GO:0001759">
    <property type="term" value="P:organ induction"/>
    <property type="evidence" value="ECO:0000315"/>
    <property type="project" value="MGI"/>
</dbReference>
<dbReference type="GO" id="GO:0071599">
    <property type="term" value="P:otic vesicle development"/>
    <property type="evidence" value="ECO:0000315"/>
    <property type="project" value="MGI"/>
</dbReference>
<dbReference type="GO" id="GO:0003151">
    <property type="term" value="P:outflow tract morphogenesis"/>
    <property type="evidence" value="ECO:0000316"/>
    <property type="project" value="MGI"/>
</dbReference>
<dbReference type="GO" id="GO:0007389">
    <property type="term" value="P:pattern specification process"/>
    <property type="evidence" value="ECO:0000315"/>
    <property type="project" value="MGI"/>
</dbReference>
<dbReference type="GO" id="GO:0060037">
    <property type="term" value="P:pharyngeal system development"/>
    <property type="evidence" value="ECO:0000315"/>
    <property type="project" value="UniProtKB"/>
</dbReference>
<dbReference type="GO" id="GO:0090190">
    <property type="term" value="P:positive regulation of branching involved in ureteric bud morphogenesis"/>
    <property type="evidence" value="ECO:0000315"/>
    <property type="project" value="UniProtKB"/>
</dbReference>
<dbReference type="GO" id="GO:0090336">
    <property type="term" value="P:positive regulation of brown fat cell differentiation"/>
    <property type="evidence" value="ECO:0000315"/>
    <property type="project" value="UniProtKB"/>
</dbReference>
<dbReference type="GO" id="GO:0045893">
    <property type="term" value="P:positive regulation of DNA-templated transcription"/>
    <property type="evidence" value="ECO:0000314"/>
    <property type="project" value="UniProtKB"/>
</dbReference>
<dbReference type="GO" id="GO:2000729">
    <property type="term" value="P:positive regulation of mesenchymal cell proliferation involved in ureter development"/>
    <property type="evidence" value="ECO:0000316"/>
    <property type="project" value="MGI"/>
</dbReference>
<dbReference type="GO" id="GO:2000288">
    <property type="term" value="P:positive regulation of myoblast proliferation"/>
    <property type="evidence" value="ECO:0000316"/>
    <property type="project" value="MGI"/>
</dbReference>
<dbReference type="GO" id="GO:0072513">
    <property type="term" value="P:positive regulation of secondary heart field cardioblast proliferation"/>
    <property type="evidence" value="ECO:0000316"/>
    <property type="project" value="MGI"/>
</dbReference>
<dbReference type="GO" id="GO:0045944">
    <property type="term" value="P:positive regulation of transcription by RNA polymerase II"/>
    <property type="evidence" value="ECO:0000314"/>
    <property type="project" value="MGI"/>
</dbReference>
<dbReference type="GO" id="GO:0072107">
    <property type="term" value="P:positive regulation of ureteric bud formation"/>
    <property type="evidence" value="ECO:0000315"/>
    <property type="project" value="UniProtKB"/>
</dbReference>
<dbReference type="GO" id="GO:0034504">
    <property type="term" value="P:protein localization to nucleus"/>
    <property type="evidence" value="ECO:0007669"/>
    <property type="project" value="Ensembl"/>
</dbReference>
<dbReference type="GO" id="GO:0072095">
    <property type="term" value="P:regulation of branch elongation involved in ureteric bud branching"/>
    <property type="evidence" value="ECO:0000315"/>
    <property type="project" value="UniProtKB"/>
</dbReference>
<dbReference type="GO" id="GO:0006355">
    <property type="term" value="P:regulation of DNA-templated transcription"/>
    <property type="evidence" value="ECO:0000314"/>
    <property type="project" value="MGI"/>
</dbReference>
<dbReference type="GO" id="GO:0050678">
    <property type="term" value="P:regulation of epithelial cell proliferation"/>
    <property type="evidence" value="ECO:0000315"/>
    <property type="project" value="UniProtKB"/>
</dbReference>
<dbReference type="GO" id="GO:0010468">
    <property type="term" value="P:regulation of gene expression"/>
    <property type="evidence" value="ECO:0000316"/>
    <property type="project" value="MGI"/>
</dbReference>
<dbReference type="GO" id="GO:0045664">
    <property type="term" value="P:regulation of neuron differentiation"/>
    <property type="evidence" value="ECO:0000315"/>
    <property type="project" value="MGI"/>
</dbReference>
<dbReference type="GO" id="GO:0032880">
    <property type="term" value="P:regulation of protein localization"/>
    <property type="evidence" value="ECO:0000316"/>
    <property type="project" value="MGI"/>
</dbReference>
<dbReference type="GO" id="GO:2001014">
    <property type="term" value="P:regulation of skeletal muscle cell differentiation"/>
    <property type="evidence" value="ECO:0000314"/>
    <property type="project" value="UniProtKB"/>
</dbReference>
<dbReference type="GO" id="GO:0014842">
    <property type="term" value="P:regulation of skeletal muscle satellite cell proliferation"/>
    <property type="evidence" value="ECO:0000314"/>
    <property type="project" value="UniProtKB"/>
</dbReference>
<dbReference type="GO" id="GO:0008582">
    <property type="term" value="P:regulation of synaptic assembly at neuromuscular junction"/>
    <property type="evidence" value="ECO:0000316"/>
    <property type="project" value="MGI"/>
</dbReference>
<dbReference type="GO" id="GO:0007605">
    <property type="term" value="P:sensory perception of sound"/>
    <property type="evidence" value="ECO:0000315"/>
    <property type="project" value="MGI"/>
</dbReference>
<dbReference type="GO" id="GO:0007519">
    <property type="term" value="P:skeletal muscle tissue development"/>
    <property type="evidence" value="ECO:0000315"/>
    <property type="project" value="UniProtKB"/>
</dbReference>
<dbReference type="GO" id="GO:0048705">
    <property type="term" value="P:skeletal system morphogenesis"/>
    <property type="evidence" value="ECO:0000315"/>
    <property type="project" value="MGI"/>
</dbReference>
<dbReference type="GO" id="GO:0007382">
    <property type="term" value="P:specification of segmental identity, maxillary segment"/>
    <property type="evidence" value="ECO:0000315"/>
    <property type="project" value="MGI"/>
</dbReference>
<dbReference type="GO" id="GO:0048538">
    <property type="term" value="P:thymus development"/>
    <property type="evidence" value="ECO:0000315"/>
    <property type="project" value="MGI"/>
</dbReference>
<dbReference type="GO" id="GO:0030878">
    <property type="term" value="P:thyroid gland development"/>
    <property type="evidence" value="ECO:0000315"/>
    <property type="project" value="MGI"/>
</dbReference>
<dbReference type="GO" id="GO:0043586">
    <property type="term" value="P:tongue development"/>
    <property type="evidence" value="ECO:0000315"/>
    <property type="project" value="UniProtKB"/>
</dbReference>
<dbReference type="GO" id="GO:0061551">
    <property type="term" value="P:trigeminal ganglion development"/>
    <property type="evidence" value="ECO:0000315"/>
    <property type="project" value="UniProtKB"/>
</dbReference>
<dbReference type="GO" id="GO:0072193">
    <property type="term" value="P:ureter smooth muscle cell differentiation"/>
    <property type="evidence" value="ECO:0000315"/>
    <property type="project" value="MGI"/>
</dbReference>
<dbReference type="GO" id="GO:0001657">
    <property type="term" value="P:ureteric bud development"/>
    <property type="evidence" value="ECO:0000315"/>
    <property type="project" value="MGI"/>
</dbReference>
<dbReference type="CDD" id="cd00086">
    <property type="entry name" value="homeodomain"/>
    <property type="match status" value="1"/>
</dbReference>
<dbReference type="FunFam" id="1.10.10.60:FF:000063">
    <property type="entry name" value="SIX homeobox 2"/>
    <property type="match status" value="1"/>
</dbReference>
<dbReference type="Gene3D" id="1.10.10.60">
    <property type="entry name" value="Homeodomain-like"/>
    <property type="match status" value="1"/>
</dbReference>
<dbReference type="InterPro" id="IPR001356">
    <property type="entry name" value="HD"/>
</dbReference>
<dbReference type="InterPro" id="IPR017970">
    <property type="entry name" value="Homeobox_CS"/>
</dbReference>
<dbReference type="InterPro" id="IPR009057">
    <property type="entry name" value="Homeodomain-like_sf"/>
</dbReference>
<dbReference type="InterPro" id="IPR008422">
    <property type="entry name" value="KN_HD"/>
</dbReference>
<dbReference type="InterPro" id="IPR031701">
    <property type="entry name" value="SIX1_SD"/>
</dbReference>
<dbReference type="PANTHER" id="PTHR10390">
    <property type="entry name" value="HOMEOBOX PROTEIN SIX"/>
    <property type="match status" value="1"/>
</dbReference>
<dbReference type="PANTHER" id="PTHR10390:SF13">
    <property type="entry name" value="HOMEOBOX PROTEIN SIX1"/>
    <property type="match status" value="1"/>
</dbReference>
<dbReference type="Pfam" id="PF05920">
    <property type="entry name" value="Homeobox_KN"/>
    <property type="match status" value="1"/>
</dbReference>
<dbReference type="Pfam" id="PF16878">
    <property type="entry name" value="SIX1_SD"/>
    <property type="match status" value="1"/>
</dbReference>
<dbReference type="SMART" id="SM00389">
    <property type="entry name" value="HOX"/>
    <property type="match status" value="1"/>
</dbReference>
<dbReference type="SUPFAM" id="SSF46689">
    <property type="entry name" value="Homeodomain-like"/>
    <property type="match status" value="1"/>
</dbReference>
<dbReference type="PROSITE" id="PS00027">
    <property type="entry name" value="HOMEOBOX_1"/>
    <property type="match status" value="1"/>
</dbReference>
<dbReference type="PROSITE" id="PS50071">
    <property type="entry name" value="HOMEOBOX_2"/>
    <property type="match status" value="1"/>
</dbReference>